<proteinExistence type="predicted"/>
<sequence>MNNNYHTQINRPNMLNEIAANNNLLNNKNNQTNQLNNNQYNNQYNNQNNNQNYPQNYPQNSQQNFQQNSQQNHQQNYQQNYPQKFPHQQNNITEDLVDIELSDSKESGSEYPQSVQQTHQQPIQNNPSIPNNQPNQINQYNQQPNQYNHQQPNQFTQNQPNQPNQPNQHNQYSQHNQPNQSNQPNQYNQNNQFAQPNQYNQSGQLNHTNKINKQIQKQLDKNQPEKIPSKPEKNQKQSHKPKLPPTMQHGPLPIHGMPIQHMPPQLPMQTEYCKKSNSLFDYIIIPIALVLVFLFLVHPKTFQNNW</sequence>
<gene>
    <name type="ordered locus">MIMI_R335</name>
</gene>
<reference key="1">
    <citation type="journal article" date="2004" name="Science">
        <title>The 1.2-megabase genome sequence of Mimivirus.</title>
        <authorList>
            <person name="Raoult D."/>
            <person name="Audic S."/>
            <person name="Robert C."/>
            <person name="Abergel C."/>
            <person name="Renesto P."/>
            <person name="Ogata H."/>
            <person name="La Scola B."/>
            <person name="Susan M."/>
            <person name="Claverie J.-M."/>
        </authorList>
    </citation>
    <scope>NUCLEOTIDE SEQUENCE [LARGE SCALE GENOMIC DNA]</scope>
    <source>
        <strain>Rowbotham-Bradford</strain>
    </source>
</reference>
<keyword id="KW-0175">Coiled coil</keyword>
<keyword id="KW-0472">Membrane</keyword>
<keyword id="KW-1185">Reference proteome</keyword>
<keyword id="KW-0812">Transmembrane</keyword>
<keyword id="KW-1133">Transmembrane helix</keyword>
<protein>
    <recommendedName>
        <fullName>Uncharacterized protein R335</fullName>
    </recommendedName>
</protein>
<feature type="chain" id="PRO_0000071269" description="Uncharacterized protein R335">
    <location>
        <begin position="1"/>
        <end position="306"/>
    </location>
</feature>
<feature type="transmembrane region" description="Helical" evidence="1">
    <location>
        <begin position="279"/>
        <end position="299"/>
    </location>
</feature>
<feature type="region of interest" description="Disordered" evidence="2">
    <location>
        <begin position="44"/>
        <end position="76"/>
    </location>
</feature>
<feature type="region of interest" description="Disordered" evidence="2">
    <location>
        <begin position="103"/>
        <end position="204"/>
    </location>
</feature>
<feature type="region of interest" description="Disordered" evidence="2">
    <location>
        <begin position="216"/>
        <end position="249"/>
    </location>
</feature>
<feature type="coiled-coil region" evidence="1">
    <location>
        <begin position="13"/>
        <end position="39"/>
    </location>
</feature>
<feature type="compositionally biased region" description="Low complexity" evidence="2">
    <location>
        <begin position="119"/>
        <end position="201"/>
    </location>
</feature>
<feature type="compositionally biased region" description="Basic and acidic residues" evidence="2">
    <location>
        <begin position="218"/>
        <end position="235"/>
    </location>
</feature>
<organism>
    <name type="scientific">Acanthamoeba polyphaga mimivirus</name>
    <name type="common">APMV</name>
    <dbReference type="NCBI Taxonomy" id="212035"/>
    <lineage>
        <taxon>Viruses</taxon>
        <taxon>Varidnaviria</taxon>
        <taxon>Bamfordvirae</taxon>
        <taxon>Nucleocytoviricota</taxon>
        <taxon>Megaviricetes</taxon>
        <taxon>Imitervirales</taxon>
        <taxon>Mimiviridae</taxon>
        <taxon>Megamimivirinae</taxon>
        <taxon>Mimivirus</taxon>
        <taxon>Mimivirus bradfordmassiliense</taxon>
    </lineage>
</organism>
<comment type="subcellular location">
    <subcellularLocation>
        <location evidence="3">Membrane</location>
        <topology evidence="3">Single-pass membrane protein</topology>
    </subcellularLocation>
</comment>
<dbReference type="EMBL" id="AY653733">
    <property type="protein sequence ID" value="AAV50604.1"/>
    <property type="molecule type" value="Genomic_DNA"/>
</dbReference>
<dbReference type="Proteomes" id="UP000001134">
    <property type="component" value="Genome"/>
</dbReference>
<dbReference type="GO" id="GO:0016020">
    <property type="term" value="C:membrane"/>
    <property type="evidence" value="ECO:0007669"/>
    <property type="project" value="UniProtKB-SubCell"/>
</dbReference>
<organismHost>
    <name type="scientific">Acanthamoeba polyphaga</name>
    <name type="common">Amoeba</name>
    <dbReference type="NCBI Taxonomy" id="5757"/>
</organismHost>
<evidence type="ECO:0000255" key="1"/>
<evidence type="ECO:0000256" key="2">
    <source>
        <dbReference type="SAM" id="MobiDB-lite"/>
    </source>
</evidence>
<evidence type="ECO:0000305" key="3"/>
<name>YR335_MIMIV</name>
<accession>Q5UQT2</accession>